<keyword id="KW-0687">Ribonucleoprotein</keyword>
<keyword id="KW-0689">Ribosomal protein</keyword>
<keyword id="KW-0694">RNA-binding</keyword>
<keyword id="KW-0699">rRNA-binding</keyword>
<dbReference type="EMBL" id="CP000712">
    <property type="protein sequence ID" value="ABQ76809.1"/>
    <property type="molecule type" value="Genomic_DNA"/>
</dbReference>
<dbReference type="SMR" id="A5VY49"/>
<dbReference type="KEGG" id="ppf:Pput_0641"/>
<dbReference type="eggNOG" id="COG0268">
    <property type="taxonomic scope" value="Bacteria"/>
</dbReference>
<dbReference type="HOGENOM" id="CLU_160655_4_0_6"/>
<dbReference type="GO" id="GO:0005829">
    <property type="term" value="C:cytosol"/>
    <property type="evidence" value="ECO:0007669"/>
    <property type="project" value="TreeGrafter"/>
</dbReference>
<dbReference type="GO" id="GO:0015935">
    <property type="term" value="C:small ribosomal subunit"/>
    <property type="evidence" value="ECO:0007669"/>
    <property type="project" value="TreeGrafter"/>
</dbReference>
<dbReference type="GO" id="GO:0070181">
    <property type="term" value="F:small ribosomal subunit rRNA binding"/>
    <property type="evidence" value="ECO:0007669"/>
    <property type="project" value="TreeGrafter"/>
</dbReference>
<dbReference type="GO" id="GO:0003735">
    <property type="term" value="F:structural constituent of ribosome"/>
    <property type="evidence" value="ECO:0007669"/>
    <property type="project" value="InterPro"/>
</dbReference>
<dbReference type="GO" id="GO:0006412">
    <property type="term" value="P:translation"/>
    <property type="evidence" value="ECO:0007669"/>
    <property type="project" value="UniProtKB-UniRule"/>
</dbReference>
<dbReference type="FunFam" id="1.20.58.110:FF:000001">
    <property type="entry name" value="30S ribosomal protein S20"/>
    <property type="match status" value="1"/>
</dbReference>
<dbReference type="Gene3D" id="1.20.58.110">
    <property type="entry name" value="Ribosomal protein S20"/>
    <property type="match status" value="1"/>
</dbReference>
<dbReference type="HAMAP" id="MF_00500">
    <property type="entry name" value="Ribosomal_bS20"/>
    <property type="match status" value="1"/>
</dbReference>
<dbReference type="InterPro" id="IPR002583">
    <property type="entry name" value="Ribosomal_bS20"/>
</dbReference>
<dbReference type="InterPro" id="IPR036510">
    <property type="entry name" value="Ribosomal_bS20_sf"/>
</dbReference>
<dbReference type="NCBIfam" id="TIGR00029">
    <property type="entry name" value="S20"/>
    <property type="match status" value="1"/>
</dbReference>
<dbReference type="PANTHER" id="PTHR33398">
    <property type="entry name" value="30S RIBOSOMAL PROTEIN S20"/>
    <property type="match status" value="1"/>
</dbReference>
<dbReference type="PANTHER" id="PTHR33398:SF1">
    <property type="entry name" value="SMALL RIBOSOMAL SUBUNIT PROTEIN BS20C"/>
    <property type="match status" value="1"/>
</dbReference>
<dbReference type="Pfam" id="PF01649">
    <property type="entry name" value="Ribosomal_S20p"/>
    <property type="match status" value="1"/>
</dbReference>
<dbReference type="SUPFAM" id="SSF46992">
    <property type="entry name" value="Ribosomal protein S20"/>
    <property type="match status" value="1"/>
</dbReference>
<evidence type="ECO:0000255" key="1">
    <source>
        <dbReference type="HAMAP-Rule" id="MF_00500"/>
    </source>
</evidence>
<evidence type="ECO:0000256" key="2">
    <source>
        <dbReference type="SAM" id="MobiDB-lite"/>
    </source>
</evidence>
<evidence type="ECO:0000305" key="3"/>
<reference key="1">
    <citation type="submission" date="2007-05" db="EMBL/GenBank/DDBJ databases">
        <title>Complete sequence of Pseudomonas putida F1.</title>
        <authorList>
            <consortium name="US DOE Joint Genome Institute"/>
            <person name="Copeland A."/>
            <person name="Lucas S."/>
            <person name="Lapidus A."/>
            <person name="Barry K."/>
            <person name="Detter J.C."/>
            <person name="Glavina del Rio T."/>
            <person name="Hammon N."/>
            <person name="Israni S."/>
            <person name="Dalin E."/>
            <person name="Tice H."/>
            <person name="Pitluck S."/>
            <person name="Chain P."/>
            <person name="Malfatti S."/>
            <person name="Shin M."/>
            <person name="Vergez L."/>
            <person name="Schmutz J."/>
            <person name="Larimer F."/>
            <person name="Land M."/>
            <person name="Hauser L."/>
            <person name="Kyrpides N."/>
            <person name="Lykidis A."/>
            <person name="Parales R."/>
            <person name="Richardson P."/>
        </authorList>
    </citation>
    <scope>NUCLEOTIDE SEQUENCE [LARGE SCALE GENOMIC DNA]</scope>
    <source>
        <strain>ATCC 700007 / DSM 6899 / JCM 31910 / BCRC 17059 / LMG 24140 / F1</strain>
    </source>
</reference>
<accession>A5VY49</accession>
<organism>
    <name type="scientific">Pseudomonas putida (strain ATCC 700007 / DSM 6899 / JCM 31910 / BCRC 17059 / LMG 24140 / F1)</name>
    <dbReference type="NCBI Taxonomy" id="351746"/>
    <lineage>
        <taxon>Bacteria</taxon>
        <taxon>Pseudomonadati</taxon>
        <taxon>Pseudomonadota</taxon>
        <taxon>Gammaproteobacteria</taxon>
        <taxon>Pseudomonadales</taxon>
        <taxon>Pseudomonadaceae</taxon>
        <taxon>Pseudomonas</taxon>
    </lineage>
</organism>
<protein>
    <recommendedName>
        <fullName evidence="1">Small ribosomal subunit protein bS20</fullName>
    </recommendedName>
    <alternativeName>
        <fullName evidence="3">30S ribosomal protein S20</fullName>
    </alternativeName>
</protein>
<feature type="chain" id="PRO_1000014634" description="Small ribosomal subunit protein bS20">
    <location>
        <begin position="1"/>
        <end position="92"/>
    </location>
</feature>
<feature type="region of interest" description="Disordered" evidence="2">
    <location>
        <begin position="1"/>
        <end position="23"/>
    </location>
</feature>
<feature type="compositionally biased region" description="Basic residues" evidence="2">
    <location>
        <begin position="7"/>
        <end position="20"/>
    </location>
</feature>
<gene>
    <name evidence="1" type="primary">rpsT</name>
    <name type="ordered locus">Pput_0641</name>
</gene>
<comment type="function">
    <text evidence="1">Binds directly to 16S ribosomal RNA.</text>
</comment>
<comment type="similarity">
    <text evidence="1">Belongs to the bacterial ribosomal protein bS20 family.</text>
</comment>
<proteinExistence type="inferred from homology"/>
<name>RS20_PSEP1</name>
<sequence length="92" mass="10069">MANTPSAKKRAKQAEKRRSHNASLRSMVRTYIKNVVKAIDAKDAEKAQAAYVLAVPVIDRMADKGIIHKNKAARHKGRLNGHIKALKEAAAA</sequence>